<accession>Q839D4</accession>
<name>ECFA2_ENTFA</name>
<evidence type="ECO:0000255" key="1">
    <source>
        <dbReference type="HAMAP-Rule" id="MF_01710"/>
    </source>
</evidence>
<evidence type="ECO:0000305" key="2"/>
<proteinExistence type="inferred from homology"/>
<keyword id="KW-0067">ATP-binding</keyword>
<keyword id="KW-1003">Cell membrane</keyword>
<keyword id="KW-0472">Membrane</keyword>
<keyword id="KW-0547">Nucleotide-binding</keyword>
<keyword id="KW-1185">Reference proteome</keyword>
<keyword id="KW-1278">Translocase</keyword>
<keyword id="KW-0813">Transport</keyword>
<reference key="1">
    <citation type="journal article" date="2003" name="Science">
        <title>Role of mobile DNA in the evolution of vancomycin-resistant Enterococcus faecalis.</title>
        <authorList>
            <person name="Paulsen I.T."/>
            <person name="Banerjei L."/>
            <person name="Myers G.S.A."/>
            <person name="Nelson K.E."/>
            <person name="Seshadri R."/>
            <person name="Read T.D."/>
            <person name="Fouts D.E."/>
            <person name="Eisen J.A."/>
            <person name="Gill S.R."/>
            <person name="Heidelberg J.F."/>
            <person name="Tettelin H."/>
            <person name="Dodson R.J."/>
            <person name="Umayam L.A."/>
            <person name="Brinkac L.M."/>
            <person name="Beanan M.J."/>
            <person name="Daugherty S.C."/>
            <person name="DeBoy R.T."/>
            <person name="Durkin S.A."/>
            <person name="Kolonay J.F."/>
            <person name="Madupu R."/>
            <person name="Nelson W.C."/>
            <person name="Vamathevan J.J."/>
            <person name="Tran B."/>
            <person name="Upton J."/>
            <person name="Hansen T."/>
            <person name="Shetty J."/>
            <person name="Khouri H.M."/>
            <person name="Utterback T.R."/>
            <person name="Radune D."/>
            <person name="Ketchum K.A."/>
            <person name="Dougherty B.A."/>
            <person name="Fraser C.M."/>
        </authorList>
    </citation>
    <scope>NUCLEOTIDE SEQUENCE [LARGE SCALE GENOMIC DNA]</scope>
    <source>
        <strain>ATCC 700802 / V583</strain>
    </source>
</reference>
<gene>
    <name evidence="1" type="primary">ecfA2</name>
    <name type="synonym">cbiO2</name>
    <name type="ordered locus">EF_0238</name>
</gene>
<protein>
    <recommendedName>
        <fullName evidence="1">Energy-coupling factor transporter ATP-binding protein EcfA2</fullName>
        <shortName evidence="1">ECF transporter A component EcfA2</shortName>
        <ecNumber evidence="1">7.-.-.-</ecNumber>
    </recommendedName>
</protein>
<comment type="function">
    <text evidence="1">ATP-binding (A) component of a common energy-coupling factor (ECF) ABC-transporter complex. Unlike classic ABC transporters this ECF transporter provides the energy necessary to transport a number of different substrates.</text>
</comment>
<comment type="subunit">
    <text evidence="1">Forms a stable energy-coupling factor (ECF) transporter complex composed of 2 membrane-embedded substrate-binding proteins (S component), 2 ATP-binding proteins (A component) and 2 transmembrane proteins (T component).</text>
</comment>
<comment type="subcellular location">
    <subcellularLocation>
        <location evidence="1">Cell membrane</location>
        <topology evidence="1">Peripheral membrane protein</topology>
    </subcellularLocation>
</comment>
<comment type="similarity">
    <text evidence="1">Belongs to the ABC transporter superfamily. Energy-coupling factor EcfA family.</text>
</comment>
<comment type="sequence caution" evidence="2">
    <conflict type="erroneous initiation">
        <sequence resource="EMBL-CDS" id="AAO80106"/>
    </conflict>
    <text>Extended N-terminus.</text>
</comment>
<feature type="chain" id="PRO_0000092008" description="Energy-coupling factor transporter ATP-binding protein EcfA2">
    <location>
        <begin position="1"/>
        <end position="289"/>
    </location>
</feature>
<feature type="domain" description="ABC transporter" evidence="1">
    <location>
        <begin position="3"/>
        <end position="246"/>
    </location>
</feature>
<feature type="binding site" evidence="1">
    <location>
        <begin position="40"/>
        <end position="47"/>
    </location>
    <ligand>
        <name>ATP</name>
        <dbReference type="ChEBI" id="CHEBI:30616"/>
    </ligand>
</feature>
<organism>
    <name type="scientific">Enterococcus faecalis (strain ATCC 700802 / V583)</name>
    <dbReference type="NCBI Taxonomy" id="226185"/>
    <lineage>
        <taxon>Bacteria</taxon>
        <taxon>Bacillati</taxon>
        <taxon>Bacillota</taxon>
        <taxon>Bacilli</taxon>
        <taxon>Lactobacillales</taxon>
        <taxon>Enterococcaceae</taxon>
        <taxon>Enterococcus</taxon>
    </lineage>
</organism>
<dbReference type="EC" id="7.-.-.-" evidence="1"/>
<dbReference type="EMBL" id="AE016830">
    <property type="protein sequence ID" value="AAO80106.1"/>
    <property type="status" value="ALT_INIT"/>
    <property type="molecule type" value="Genomic_DNA"/>
</dbReference>
<dbReference type="RefSeq" id="NP_814035.1">
    <property type="nucleotide sequence ID" value="NC_004668.1"/>
</dbReference>
<dbReference type="RefSeq" id="WP_002381364.1">
    <property type="nucleotide sequence ID" value="NZ_KE136524.1"/>
</dbReference>
<dbReference type="SMR" id="Q839D4"/>
<dbReference type="STRING" id="226185.EF_0238"/>
<dbReference type="TCDB" id="3.A.1.26.10">
    <property type="family name" value="the atp-binding cassette (abc) superfamily"/>
</dbReference>
<dbReference type="TCDB" id="3.A.1.26.7">
    <property type="family name" value="the atp-binding cassette (abc) superfamily"/>
</dbReference>
<dbReference type="EnsemblBacteria" id="AAO80106">
    <property type="protein sequence ID" value="AAO80106"/>
    <property type="gene ID" value="EF_0238"/>
</dbReference>
<dbReference type="KEGG" id="efa:EF0238"/>
<dbReference type="PATRIC" id="fig|226185.45.peg.29"/>
<dbReference type="eggNOG" id="COG1122">
    <property type="taxonomic scope" value="Bacteria"/>
</dbReference>
<dbReference type="HOGENOM" id="CLU_000604_1_22_9"/>
<dbReference type="Proteomes" id="UP000001415">
    <property type="component" value="Chromosome"/>
</dbReference>
<dbReference type="GO" id="GO:0043190">
    <property type="term" value="C:ATP-binding cassette (ABC) transporter complex"/>
    <property type="evidence" value="ECO:0007669"/>
    <property type="project" value="TreeGrafter"/>
</dbReference>
<dbReference type="GO" id="GO:0005524">
    <property type="term" value="F:ATP binding"/>
    <property type="evidence" value="ECO:0007669"/>
    <property type="project" value="UniProtKB-KW"/>
</dbReference>
<dbReference type="GO" id="GO:0016887">
    <property type="term" value="F:ATP hydrolysis activity"/>
    <property type="evidence" value="ECO:0007669"/>
    <property type="project" value="InterPro"/>
</dbReference>
<dbReference type="GO" id="GO:0042626">
    <property type="term" value="F:ATPase-coupled transmembrane transporter activity"/>
    <property type="evidence" value="ECO:0007669"/>
    <property type="project" value="TreeGrafter"/>
</dbReference>
<dbReference type="CDD" id="cd03225">
    <property type="entry name" value="ABC_cobalt_CbiO_domain1"/>
    <property type="match status" value="1"/>
</dbReference>
<dbReference type="FunFam" id="3.40.50.300:FF:000224">
    <property type="entry name" value="Energy-coupling factor transporter ATP-binding protein EcfA"/>
    <property type="match status" value="1"/>
</dbReference>
<dbReference type="Gene3D" id="3.40.50.300">
    <property type="entry name" value="P-loop containing nucleotide triphosphate hydrolases"/>
    <property type="match status" value="1"/>
</dbReference>
<dbReference type="InterPro" id="IPR003593">
    <property type="entry name" value="AAA+_ATPase"/>
</dbReference>
<dbReference type="InterPro" id="IPR003439">
    <property type="entry name" value="ABC_transporter-like_ATP-bd"/>
</dbReference>
<dbReference type="InterPro" id="IPR017871">
    <property type="entry name" value="ABC_transporter-like_CS"/>
</dbReference>
<dbReference type="InterPro" id="IPR015856">
    <property type="entry name" value="ABC_transpr_CbiO/EcfA_su"/>
</dbReference>
<dbReference type="InterPro" id="IPR050095">
    <property type="entry name" value="ECF_ABC_transporter_ATP-bd"/>
</dbReference>
<dbReference type="InterPro" id="IPR030946">
    <property type="entry name" value="EcfA2"/>
</dbReference>
<dbReference type="InterPro" id="IPR027417">
    <property type="entry name" value="P-loop_NTPase"/>
</dbReference>
<dbReference type="NCBIfam" id="TIGR04521">
    <property type="entry name" value="ECF_ATPase_2"/>
    <property type="match status" value="1"/>
</dbReference>
<dbReference type="NCBIfam" id="NF010155">
    <property type="entry name" value="PRK13634.1"/>
    <property type="match status" value="1"/>
</dbReference>
<dbReference type="PANTHER" id="PTHR43553:SF27">
    <property type="entry name" value="ENERGY-COUPLING FACTOR TRANSPORTER ATP-BINDING PROTEIN ECFA2"/>
    <property type="match status" value="1"/>
</dbReference>
<dbReference type="PANTHER" id="PTHR43553">
    <property type="entry name" value="HEAVY METAL TRANSPORTER"/>
    <property type="match status" value="1"/>
</dbReference>
<dbReference type="Pfam" id="PF00005">
    <property type="entry name" value="ABC_tran"/>
    <property type="match status" value="1"/>
</dbReference>
<dbReference type="SMART" id="SM00382">
    <property type="entry name" value="AAA"/>
    <property type="match status" value="1"/>
</dbReference>
<dbReference type="SUPFAM" id="SSF52540">
    <property type="entry name" value="P-loop containing nucleoside triphosphate hydrolases"/>
    <property type="match status" value="1"/>
</dbReference>
<dbReference type="PROSITE" id="PS00211">
    <property type="entry name" value="ABC_TRANSPORTER_1"/>
    <property type="match status" value="1"/>
</dbReference>
<dbReference type="PROSITE" id="PS50893">
    <property type="entry name" value="ABC_TRANSPORTER_2"/>
    <property type="match status" value="1"/>
</dbReference>
<dbReference type="PROSITE" id="PS51246">
    <property type="entry name" value="CBIO"/>
    <property type="match status" value="1"/>
</dbReference>
<sequence>MDIRFKQVDFTYQPNTPFEQRALFDINLTIQDGSYTAIVGHTGSGKSTLLQHLNALVKPTKGQVTIGERVITPETDNKNLKPIRKKVGIVFQFPEAQLFEETVERDIAFGPKNFGVSDEEAKKLAKKMLDLVGLDEKYLQHSPFELSGGQMRRVAIAGVLAMEPEVLVLDEPTAGLDPKGRKEMMEMFSRLHKEHNMTIVLVTHLMDDVANYADHVIVLEKGQIVRAGAPQEVFQETQWLKEKQLGVPTAAEFAEKLVAKGFSFEQLPLTADQLADQLLKKMQEAGEAK</sequence>